<proteinExistence type="inferred from homology"/>
<comment type="function">
    <text evidence="1">Forms part of the ribosomal stalk which helps the ribosome interact with GTP-bound translation factors. Is thus essential for accurate translation.</text>
</comment>
<comment type="subunit">
    <text evidence="1">Homodimer. Part of the ribosomal stalk of the 50S ribosomal subunit. Forms a multimeric L10(L12)X complex, where L10 forms an elongated spine to which 2 to 4 L12 dimers bind in a sequential fashion. Binds GTP-bound translation factors.</text>
</comment>
<comment type="similarity">
    <text evidence="1">Belongs to the bacterial ribosomal protein bL12 family.</text>
</comment>
<organism>
    <name type="scientific">Prochlorococcus marinus (strain MIT 9215)</name>
    <dbReference type="NCBI Taxonomy" id="93060"/>
    <lineage>
        <taxon>Bacteria</taxon>
        <taxon>Bacillati</taxon>
        <taxon>Cyanobacteriota</taxon>
        <taxon>Cyanophyceae</taxon>
        <taxon>Synechococcales</taxon>
        <taxon>Prochlorococcaceae</taxon>
        <taxon>Prochlorococcus</taxon>
    </lineage>
</organism>
<keyword id="KW-0687">Ribonucleoprotein</keyword>
<keyword id="KW-0689">Ribosomal protein</keyword>
<name>RL7_PROM2</name>
<evidence type="ECO:0000255" key="1">
    <source>
        <dbReference type="HAMAP-Rule" id="MF_00368"/>
    </source>
</evidence>
<evidence type="ECO:0000305" key="2"/>
<sequence>MSAKTEEILESLKSLSLLEASELVKQIEEAFGVSAAASAGVVMAAPGAAGGDGDDGAAEEKTEFDVVLESFDAAAKIKVLKVVRNATGLGLGDAKTLVESAPKTVKEGIAKADAESLKKEIEEAGGKVTLK</sequence>
<reference key="1">
    <citation type="journal article" date="2007" name="PLoS Genet.">
        <title>Patterns and implications of gene gain and loss in the evolution of Prochlorococcus.</title>
        <authorList>
            <person name="Kettler G.C."/>
            <person name="Martiny A.C."/>
            <person name="Huang K."/>
            <person name="Zucker J."/>
            <person name="Coleman M.L."/>
            <person name="Rodrigue S."/>
            <person name="Chen F."/>
            <person name="Lapidus A."/>
            <person name="Ferriera S."/>
            <person name="Johnson J."/>
            <person name="Steglich C."/>
            <person name="Church G.M."/>
            <person name="Richardson P."/>
            <person name="Chisholm S.W."/>
        </authorList>
    </citation>
    <scope>NUCLEOTIDE SEQUENCE [LARGE SCALE GENOMIC DNA]</scope>
    <source>
        <strain>MIT 9215</strain>
    </source>
</reference>
<gene>
    <name evidence="1" type="primary">rplL</name>
    <name evidence="1" type="synonym">rpl12</name>
    <name type="ordered locus">P9215_02201</name>
</gene>
<accession>A8G2K8</accession>
<dbReference type="EMBL" id="CP000825">
    <property type="protein sequence ID" value="ABV49839.1"/>
    <property type="molecule type" value="Genomic_DNA"/>
</dbReference>
<dbReference type="RefSeq" id="WP_012007009.1">
    <property type="nucleotide sequence ID" value="NC_009840.1"/>
</dbReference>
<dbReference type="SMR" id="A8G2K8"/>
<dbReference type="STRING" id="93060.P9215_02201"/>
<dbReference type="KEGG" id="pmh:P9215_02201"/>
<dbReference type="eggNOG" id="COG0222">
    <property type="taxonomic scope" value="Bacteria"/>
</dbReference>
<dbReference type="HOGENOM" id="CLU_086499_3_0_3"/>
<dbReference type="OrthoDB" id="9811748at2"/>
<dbReference type="Proteomes" id="UP000002014">
    <property type="component" value="Chromosome"/>
</dbReference>
<dbReference type="GO" id="GO:0022625">
    <property type="term" value="C:cytosolic large ribosomal subunit"/>
    <property type="evidence" value="ECO:0007669"/>
    <property type="project" value="TreeGrafter"/>
</dbReference>
<dbReference type="GO" id="GO:0003729">
    <property type="term" value="F:mRNA binding"/>
    <property type="evidence" value="ECO:0007669"/>
    <property type="project" value="TreeGrafter"/>
</dbReference>
<dbReference type="GO" id="GO:0003735">
    <property type="term" value="F:structural constituent of ribosome"/>
    <property type="evidence" value="ECO:0007669"/>
    <property type="project" value="InterPro"/>
</dbReference>
<dbReference type="GO" id="GO:0006412">
    <property type="term" value="P:translation"/>
    <property type="evidence" value="ECO:0007669"/>
    <property type="project" value="UniProtKB-UniRule"/>
</dbReference>
<dbReference type="CDD" id="cd00387">
    <property type="entry name" value="Ribosomal_L7_L12"/>
    <property type="match status" value="1"/>
</dbReference>
<dbReference type="FunFam" id="3.30.1390.10:FF:000001">
    <property type="entry name" value="50S ribosomal protein L7/L12"/>
    <property type="match status" value="1"/>
</dbReference>
<dbReference type="Gene3D" id="3.30.1390.10">
    <property type="match status" value="1"/>
</dbReference>
<dbReference type="Gene3D" id="1.20.5.710">
    <property type="entry name" value="Single helix bin"/>
    <property type="match status" value="1"/>
</dbReference>
<dbReference type="HAMAP" id="MF_00368">
    <property type="entry name" value="Ribosomal_bL12"/>
    <property type="match status" value="1"/>
</dbReference>
<dbReference type="InterPro" id="IPR000206">
    <property type="entry name" value="Ribosomal_bL12"/>
</dbReference>
<dbReference type="InterPro" id="IPR013823">
    <property type="entry name" value="Ribosomal_bL12_C"/>
</dbReference>
<dbReference type="InterPro" id="IPR014719">
    <property type="entry name" value="Ribosomal_bL12_C/ClpS-like"/>
</dbReference>
<dbReference type="InterPro" id="IPR008932">
    <property type="entry name" value="Ribosomal_bL12_oligo"/>
</dbReference>
<dbReference type="InterPro" id="IPR036235">
    <property type="entry name" value="Ribosomal_bL12_oligo_N_sf"/>
</dbReference>
<dbReference type="NCBIfam" id="TIGR00855">
    <property type="entry name" value="L12"/>
    <property type="match status" value="1"/>
</dbReference>
<dbReference type="PANTHER" id="PTHR45987">
    <property type="entry name" value="39S RIBOSOMAL PROTEIN L12"/>
    <property type="match status" value="1"/>
</dbReference>
<dbReference type="PANTHER" id="PTHR45987:SF4">
    <property type="entry name" value="LARGE RIBOSOMAL SUBUNIT PROTEIN BL12M"/>
    <property type="match status" value="1"/>
</dbReference>
<dbReference type="Pfam" id="PF00542">
    <property type="entry name" value="Ribosomal_L12"/>
    <property type="match status" value="1"/>
</dbReference>
<dbReference type="Pfam" id="PF16320">
    <property type="entry name" value="Ribosomal_L12_N"/>
    <property type="match status" value="1"/>
</dbReference>
<dbReference type="SUPFAM" id="SSF54736">
    <property type="entry name" value="ClpS-like"/>
    <property type="match status" value="1"/>
</dbReference>
<dbReference type="SUPFAM" id="SSF48300">
    <property type="entry name" value="Ribosomal protein L7/12, oligomerisation (N-terminal) domain"/>
    <property type="match status" value="1"/>
</dbReference>
<feature type="chain" id="PRO_1000059927" description="Large ribosomal subunit protein bL12">
    <location>
        <begin position="1"/>
        <end position="131"/>
    </location>
</feature>
<protein>
    <recommendedName>
        <fullName evidence="1">Large ribosomal subunit protein bL12</fullName>
    </recommendedName>
    <alternativeName>
        <fullName evidence="2">50S ribosomal protein L7/L12</fullName>
    </alternativeName>
</protein>